<accession>A5ELL1</accession>
<protein>
    <recommendedName>
        <fullName evidence="1">Large ribosomal subunit protein uL18</fullName>
    </recommendedName>
    <alternativeName>
        <fullName evidence="2">50S ribosomal protein L18</fullName>
    </alternativeName>
</protein>
<organism>
    <name type="scientific">Bradyrhizobium sp. (strain BTAi1 / ATCC BAA-1182)</name>
    <dbReference type="NCBI Taxonomy" id="288000"/>
    <lineage>
        <taxon>Bacteria</taxon>
        <taxon>Pseudomonadati</taxon>
        <taxon>Pseudomonadota</taxon>
        <taxon>Alphaproteobacteria</taxon>
        <taxon>Hyphomicrobiales</taxon>
        <taxon>Nitrobacteraceae</taxon>
        <taxon>Bradyrhizobium</taxon>
    </lineage>
</organism>
<sequence>MSRAKVTNARRKQRVRLSLRRSAGGRPRLSVFRSSKHIYAQVIDDQKGETLASASSMEKEMRSSGNTGADIDAAKAVGKLLAERAVKAGIKEVVFDRGGYLYHGRVKALADAARESGLSF</sequence>
<dbReference type="EMBL" id="CP000494">
    <property type="protein sequence ID" value="ABQ37055.1"/>
    <property type="molecule type" value="Genomic_DNA"/>
</dbReference>
<dbReference type="RefSeq" id="WP_012045035.1">
    <property type="nucleotide sequence ID" value="NC_009485.1"/>
</dbReference>
<dbReference type="SMR" id="A5ELL1"/>
<dbReference type="STRING" id="288000.BBta_5054"/>
<dbReference type="KEGG" id="bbt:BBta_5054"/>
<dbReference type="eggNOG" id="COG0256">
    <property type="taxonomic scope" value="Bacteria"/>
</dbReference>
<dbReference type="HOGENOM" id="CLU_098841_0_1_5"/>
<dbReference type="OrthoDB" id="9810939at2"/>
<dbReference type="Proteomes" id="UP000000246">
    <property type="component" value="Chromosome"/>
</dbReference>
<dbReference type="GO" id="GO:0022625">
    <property type="term" value="C:cytosolic large ribosomal subunit"/>
    <property type="evidence" value="ECO:0007669"/>
    <property type="project" value="TreeGrafter"/>
</dbReference>
<dbReference type="GO" id="GO:0008097">
    <property type="term" value="F:5S rRNA binding"/>
    <property type="evidence" value="ECO:0007669"/>
    <property type="project" value="TreeGrafter"/>
</dbReference>
<dbReference type="GO" id="GO:0003735">
    <property type="term" value="F:structural constituent of ribosome"/>
    <property type="evidence" value="ECO:0007669"/>
    <property type="project" value="InterPro"/>
</dbReference>
<dbReference type="GO" id="GO:0006412">
    <property type="term" value="P:translation"/>
    <property type="evidence" value="ECO:0007669"/>
    <property type="project" value="UniProtKB-UniRule"/>
</dbReference>
<dbReference type="CDD" id="cd00432">
    <property type="entry name" value="Ribosomal_L18_L5e"/>
    <property type="match status" value="1"/>
</dbReference>
<dbReference type="FunFam" id="3.30.420.100:FF:000001">
    <property type="entry name" value="50S ribosomal protein L18"/>
    <property type="match status" value="1"/>
</dbReference>
<dbReference type="Gene3D" id="3.30.420.100">
    <property type="match status" value="1"/>
</dbReference>
<dbReference type="HAMAP" id="MF_01337_B">
    <property type="entry name" value="Ribosomal_uL18_B"/>
    <property type="match status" value="1"/>
</dbReference>
<dbReference type="InterPro" id="IPR004389">
    <property type="entry name" value="Ribosomal_uL18_bac-type"/>
</dbReference>
<dbReference type="InterPro" id="IPR005484">
    <property type="entry name" value="Ribosomal_uL18_bac/euk"/>
</dbReference>
<dbReference type="NCBIfam" id="TIGR00060">
    <property type="entry name" value="L18_bact"/>
    <property type="match status" value="1"/>
</dbReference>
<dbReference type="PANTHER" id="PTHR12899">
    <property type="entry name" value="39S RIBOSOMAL PROTEIN L18, MITOCHONDRIAL"/>
    <property type="match status" value="1"/>
</dbReference>
<dbReference type="PANTHER" id="PTHR12899:SF3">
    <property type="entry name" value="LARGE RIBOSOMAL SUBUNIT PROTEIN UL18M"/>
    <property type="match status" value="1"/>
</dbReference>
<dbReference type="Pfam" id="PF00861">
    <property type="entry name" value="Ribosomal_L18p"/>
    <property type="match status" value="1"/>
</dbReference>
<dbReference type="SUPFAM" id="SSF53137">
    <property type="entry name" value="Translational machinery components"/>
    <property type="match status" value="1"/>
</dbReference>
<proteinExistence type="inferred from homology"/>
<gene>
    <name evidence="1" type="primary">rplR</name>
    <name type="ordered locus">BBta_5054</name>
</gene>
<comment type="function">
    <text evidence="1">This is one of the proteins that bind and probably mediate the attachment of the 5S RNA into the large ribosomal subunit, where it forms part of the central protuberance.</text>
</comment>
<comment type="subunit">
    <text evidence="1">Part of the 50S ribosomal subunit; part of the 5S rRNA/L5/L18/L25 subcomplex. Contacts the 5S and 23S rRNAs.</text>
</comment>
<comment type="similarity">
    <text evidence="1">Belongs to the universal ribosomal protein uL18 family.</text>
</comment>
<reference key="1">
    <citation type="journal article" date="2007" name="Science">
        <title>Legumes symbioses: absence of nod genes in photosynthetic bradyrhizobia.</title>
        <authorList>
            <person name="Giraud E."/>
            <person name="Moulin L."/>
            <person name="Vallenet D."/>
            <person name="Barbe V."/>
            <person name="Cytryn E."/>
            <person name="Avarre J.-C."/>
            <person name="Jaubert M."/>
            <person name="Simon D."/>
            <person name="Cartieaux F."/>
            <person name="Prin Y."/>
            <person name="Bena G."/>
            <person name="Hannibal L."/>
            <person name="Fardoux J."/>
            <person name="Kojadinovic M."/>
            <person name="Vuillet L."/>
            <person name="Lajus A."/>
            <person name="Cruveiller S."/>
            <person name="Rouy Z."/>
            <person name="Mangenot S."/>
            <person name="Segurens B."/>
            <person name="Dossat C."/>
            <person name="Franck W.L."/>
            <person name="Chang W.-S."/>
            <person name="Saunders E."/>
            <person name="Bruce D."/>
            <person name="Richardson P."/>
            <person name="Normand P."/>
            <person name="Dreyfus B."/>
            <person name="Pignol D."/>
            <person name="Stacey G."/>
            <person name="Emerich D."/>
            <person name="Vermeglio A."/>
            <person name="Medigue C."/>
            <person name="Sadowsky M."/>
        </authorList>
    </citation>
    <scope>NUCLEOTIDE SEQUENCE [LARGE SCALE GENOMIC DNA]</scope>
    <source>
        <strain>BTAi1 / ATCC BAA-1182</strain>
    </source>
</reference>
<feature type="chain" id="PRO_1000052992" description="Large ribosomal subunit protein uL18">
    <location>
        <begin position="1"/>
        <end position="120"/>
    </location>
</feature>
<keyword id="KW-1185">Reference proteome</keyword>
<keyword id="KW-0687">Ribonucleoprotein</keyword>
<keyword id="KW-0689">Ribosomal protein</keyword>
<keyword id="KW-0694">RNA-binding</keyword>
<keyword id="KW-0699">rRNA-binding</keyword>
<evidence type="ECO:0000255" key="1">
    <source>
        <dbReference type="HAMAP-Rule" id="MF_01337"/>
    </source>
</evidence>
<evidence type="ECO:0000305" key="2"/>
<name>RL18_BRASB</name>